<evidence type="ECO:0000255" key="1">
    <source>
        <dbReference type="HAMAP-Rule" id="MF_00071"/>
    </source>
</evidence>
<protein>
    <recommendedName>
        <fullName evidence="1">Elongation factor 4</fullName>
        <shortName evidence="1">EF-4</shortName>
        <ecNumber evidence="1">3.6.5.n1</ecNumber>
    </recommendedName>
    <alternativeName>
        <fullName evidence="1">Ribosomal back-translocase LepA</fullName>
    </alternativeName>
</protein>
<feature type="chain" id="PRO_1000031987" description="Elongation factor 4">
    <location>
        <begin position="1"/>
        <end position="615"/>
    </location>
</feature>
<feature type="domain" description="tr-type G">
    <location>
        <begin position="17"/>
        <end position="198"/>
    </location>
</feature>
<feature type="binding site" evidence="1">
    <location>
        <begin position="29"/>
        <end position="34"/>
    </location>
    <ligand>
        <name>GTP</name>
        <dbReference type="ChEBI" id="CHEBI:37565"/>
    </ligand>
</feature>
<feature type="binding site" evidence="1">
    <location>
        <begin position="145"/>
        <end position="148"/>
    </location>
    <ligand>
        <name>GTP</name>
        <dbReference type="ChEBI" id="CHEBI:37565"/>
    </ligand>
</feature>
<reference key="1">
    <citation type="journal article" date="2008" name="J. Bacteriol.">
        <title>The genome sequence of the tomato-pathogenic actinomycete Clavibacter michiganensis subsp. michiganensis NCPPB382 reveals a large island involved in pathogenicity.</title>
        <authorList>
            <person name="Gartemann K.-H."/>
            <person name="Abt B."/>
            <person name="Bekel T."/>
            <person name="Burger A."/>
            <person name="Engemann J."/>
            <person name="Fluegel M."/>
            <person name="Gaigalat L."/>
            <person name="Goesmann A."/>
            <person name="Graefen I."/>
            <person name="Kalinowski J."/>
            <person name="Kaup O."/>
            <person name="Kirchner O."/>
            <person name="Krause L."/>
            <person name="Linke B."/>
            <person name="McHardy A."/>
            <person name="Meyer F."/>
            <person name="Pohle S."/>
            <person name="Rueckert C."/>
            <person name="Schneiker S."/>
            <person name="Zellermann E.-M."/>
            <person name="Puehler A."/>
            <person name="Eichenlaub R."/>
            <person name="Kaiser O."/>
            <person name="Bartels D."/>
        </authorList>
    </citation>
    <scope>NUCLEOTIDE SEQUENCE [LARGE SCALE GENOMIC DNA]</scope>
    <source>
        <strain>NCPPB 382</strain>
    </source>
</reference>
<name>LEPA_CLAM3</name>
<sequence length="615" mass="67049">MSPLASKALRPAATDPASIRNFCIIAHIDHGKSTLADRMLQMTGVVDSRSMRAQYLDRMDIERERGITIKSQAVRMPWELDGQTYALNMIDTPGHVDFSYEVSRSLAACEGAILLVDAAQGIEAQTLANLYLALENDLTIIPVLNKIDLPAADPDKYAAELASLIGGDPSDVLRVSGKTGAGVEDLLDRVSRTIPAPVGDPDAAARAMIFDSVYDAYRGVVTYVRMIDGKLSPREKISMMSTRATHEILEIGVSSPEPTPSDGLGVGEVGYLITGVKDVRQSKVGDTVTTAARPATEALPGYTEPLPMVFSGLYPIDGSDYPDLRDALDKLKLSDAALVYEPETSVALGFGFRCGFLGLLHLEIITERLSREFGLDLITTAPSVIYEVTSEDKKTVTVTNPSEFPGGKIVSVSEPVVKAAILAPKDYVGTIMELCQSRRGILLGMEYLGEDRVEVRYTMPLGEIVFDFFDNLKSKTAGYASLDYEPAGSQDSDLVKVDILLQGEQVDAFSAIVHRDKAYAYGVLMTGRLRELIPRQQFEVPIQAAIGARIIARESIRAMRKDVLAKCYGGDITRKRKLLEKQKEGKKRMKMVGRVEVPQEAFIAALSGDTEKKAK</sequence>
<proteinExistence type="inferred from homology"/>
<gene>
    <name evidence="1" type="primary">lepA</name>
    <name type="ordered locus">CMM_1555</name>
</gene>
<comment type="function">
    <text evidence="1">Required for accurate and efficient protein synthesis under certain stress conditions. May act as a fidelity factor of the translation reaction, by catalyzing a one-codon backward translocation of tRNAs on improperly translocated ribosomes. Back-translocation proceeds from a post-translocation (POST) complex to a pre-translocation (PRE) complex, thus giving elongation factor G a second chance to translocate the tRNAs correctly. Binds to ribosomes in a GTP-dependent manner.</text>
</comment>
<comment type="catalytic activity">
    <reaction evidence="1">
        <text>GTP + H2O = GDP + phosphate + H(+)</text>
        <dbReference type="Rhea" id="RHEA:19669"/>
        <dbReference type="ChEBI" id="CHEBI:15377"/>
        <dbReference type="ChEBI" id="CHEBI:15378"/>
        <dbReference type="ChEBI" id="CHEBI:37565"/>
        <dbReference type="ChEBI" id="CHEBI:43474"/>
        <dbReference type="ChEBI" id="CHEBI:58189"/>
        <dbReference type="EC" id="3.6.5.n1"/>
    </reaction>
</comment>
<comment type="subcellular location">
    <subcellularLocation>
        <location evidence="1">Cell membrane</location>
        <topology evidence="1">Peripheral membrane protein</topology>
        <orientation evidence="1">Cytoplasmic side</orientation>
    </subcellularLocation>
</comment>
<comment type="similarity">
    <text evidence="1">Belongs to the TRAFAC class translation factor GTPase superfamily. Classic translation factor GTPase family. LepA subfamily.</text>
</comment>
<dbReference type="EC" id="3.6.5.n1" evidence="1"/>
<dbReference type="EMBL" id="AM711867">
    <property type="protein sequence ID" value="CAN01602.1"/>
    <property type="molecule type" value="Genomic_DNA"/>
</dbReference>
<dbReference type="RefSeq" id="WP_012038242.1">
    <property type="nucleotide sequence ID" value="NC_009480.1"/>
</dbReference>
<dbReference type="SMR" id="A5CR97"/>
<dbReference type="GeneID" id="92947534"/>
<dbReference type="KEGG" id="cmi:CMM_1555"/>
<dbReference type="eggNOG" id="COG0481">
    <property type="taxonomic scope" value="Bacteria"/>
</dbReference>
<dbReference type="HOGENOM" id="CLU_009995_3_3_11"/>
<dbReference type="OrthoDB" id="9801472at2"/>
<dbReference type="Proteomes" id="UP000001564">
    <property type="component" value="Chromosome"/>
</dbReference>
<dbReference type="GO" id="GO:0005886">
    <property type="term" value="C:plasma membrane"/>
    <property type="evidence" value="ECO:0007669"/>
    <property type="project" value="UniProtKB-SubCell"/>
</dbReference>
<dbReference type="GO" id="GO:0005525">
    <property type="term" value="F:GTP binding"/>
    <property type="evidence" value="ECO:0007669"/>
    <property type="project" value="UniProtKB-UniRule"/>
</dbReference>
<dbReference type="GO" id="GO:0003924">
    <property type="term" value="F:GTPase activity"/>
    <property type="evidence" value="ECO:0007669"/>
    <property type="project" value="UniProtKB-UniRule"/>
</dbReference>
<dbReference type="GO" id="GO:0043022">
    <property type="term" value="F:ribosome binding"/>
    <property type="evidence" value="ECO:0007669"/>
    <property type="project" value="UniProtKB-UniRule"/>
</dbReference>
<dbReference type="GO" id="GO:0003746">
    <property type="term" value="F:translation elongation factor activity"/>
    <property type="evidence" value="ECO:0007669"/>
    <property type="project" value="UniProtKB-UniRule"/>
</dbReference>
<dbReference type="GO" id="GO:0045727">
    <property type="term" value="P:positive regulation of translation"/>
    <property type="evidence" value="ECO:0007669"/>
    <property type="project" value="UniProtKB-UniRule"/>
</dbReference>
<dbReference type="CDD" id="cd03699">
    <property type="entry name" value="EF4_II"/>
    <property type="match status" value="1"/>
</dbReference>
<dbReference type="CDD" id="cd16260">
    <property type="entry name" value="EF4_III"/>
    <property type="match status" value="1"/>
</dbReference>
<dbReference type="CDD" id="cd01890">
    <property type="entry name" value="LepA"/>
    <property type="match status" value="1"/>
</dbReference>
<dbReference type="CDD" id="cd03709">
    <property type="entry name" value="lepA_C"/>
    <property type="match status" value="1"/>
</dbReference>
<dbReference type="FunFam" id="3.40.50.300:FF:000078">
    <property type="entry name" value="Elongation factor 4"/>
    <property type="match status" value="1"/>
</dbReference>
<dbReference type="FunFam" id="2.40.30.10:FF:000015">
    <property type="entry name" value="Translation factor GUF1, mitochondrial"/>
    <property type="match status" value="1"/>
</dbReference>
<dbReference type="FunFam" id="3.30.70.240:FF:000007">
    <property type="entry name" value="Translation factor GUF1, mitochondrial"/>
    <property type="match status" value="1"/>
</dbReference>
<dbReference type="FunFam" id="3.30.70.2570:FF:000001">
    <property type="entry name" value="Translation factor GUF1, mitochondrial"/>
    <property type="match status" value="1"/>
</dbReference>
<dbReference type="FunFam" id="3.30.70.870:FF:000004">
    <property type="entry name" value="Translation factor GUF1, mitochondrial"/>
    <property type="match status" value="1"/>
</dbReference>
<dbReference type="Gene3D" id="3.30.70.240">
    <property type="match status" value="1"/>
</dbReference>
<dbReference type="Gene3D" id="3.30.70.2570">
    <property type="entry name" value="Elongation factor 4, C-terminal domain"/>
    <property type="match status" value="1"/>
</dbReference>
<dbReference type="Gene3D" id="3.30.70.870">
    <property type="entry name" value="Elongation Factor G (Translational Gtpase), domain 3"/>
    <property type="match status" value="1"/>
</dbReference>
<dbReference type="Gene3D" id="3.40.50.300">
    <property type="entry name" value="P-loop containing nucleotide triphosphate hydrolases"/>
    <property type="match status" value="1"/>
</dbReference>
<dbReference type="Gene3D" id="2.40.30.10">
    <property type="entry name" value="Translation factors"/>
    <property type="match status" value="1"/>
</dbReference>
<dbReference type="HAMAP" id="MF_00071">
    <property type="entry name" value="LepA"/>
    <property type="match status" value="1"/>
</dbReference>
<dbReference type="InterPro" id="IPR006297">
    <property type="entry name" value="EF-4"/>
</dbReference>
<dbReference type="InterPro" id="IPR035647">
    <property type="entry name" value="EFG_III/V"/>
</dbReference>
<dbReference type="InterPro" id="IPR000640">
    <property type="entry name" value="EFG_V-like"/>
</dbReference>
<dbReference type="InterPro" id="IPR004161">
    <property type="entry name" value="EFTu-like_2"/>
</dbReference>
<dbReference type="InterPro" id="IPR031157">
    <property type="entry name" value="G_TR_CS"/>
</dbReference>
<dbReference type="InterPro" id="IPR038363">
    <property type="entry name" value="LepA_C_sf"/>
</dbReference>
<dbReference type="InterPro" id="IPR013842">
    <property type="entry name" value="LepA_CTD"/>
</dbReference>
<dbReference type="InterPro" id="IPR035654">
    <property type="entry name" value="LepA_IV"/>
</dbReference>
<dbReference type="InterPro" id="IPR027417">
    <property type="entry name" value="P-loop_NTPase"/>
</dbReference>
<dbReference type="InterPro" id="IPR005225">
    <property type="entry name" value="Small_GTP-bd"/>
</dbReference>
<dbReference type="InterPro" id="IPR000795">
    <property type="entry name" value="T_Tr_GTP-bd_dom"/>
</dbReference>
<dbReference type="InterPro" id="IPR009000">
    <property type="entry name" value="Transl_B-barrel_sf"/>
</dbReference>
<dbReference type="NCBIfam" id="TIGR01393">
    <property type="entry name" value="lepA"/>
    <property type="match status" value="1"/>
</dbReference>
<dbReference type="NCBIfam" id="TIGR00231">
    <property type="entry name" value="small_GTP"/>
    <property type="match status" value="1"/>
</dbReference>
<dbReference type="PANTHER" id="PTHR43512:SF4">
    <property type="entry name" value="TRANSLATION FACTOR GUF1 HOMOLOG, CHLOROPLASTIC"/>
    <property type="match status" value="1"/>
</dbReference>
<dbReference type="PANTHER" id="PTHR43512">
    <property type="entry name" value="TRANSLATION FACTOR GUF1-RELATED"/>
    <property type="match status" value="1"/>
</dbReference>
<dbReference type="Pfam" id="PF00679">
    <property type="entry name" value="EFG_C"/>
    <property type="match status" value="1"/>
</dbReference>
<dbReference type="Pfam" id="PF00009">
    <property type="entry name" value="GTP_EFTU"/>
    <property type="match status" value="1"/>
</dbReference>
<dbReference type="Pfam" id="PF03144">
    <property type="entry name" value="GTP_EFTU_D2"/>
    <property type="match status" value="1"/>
</dbReference>
<dbReference type="Pfam" id="PF06421">
    <property type="entry name" value="LepA_C"/>
    <property type="match status" value="1"/>
</dbReference>
<dbReference type="PRINTS" id="PR00315">
    <property type="entry name" value="ELONGATNFCT"/>
</dbReference>
<dbReference type="SMART" id="SM00838">
    <property type="entry name" value="EFG_C"/>
    <property type="match status" value="1"/>
</dbReference>
<dbReference type="SUPFAM" id="SSF54980">
    <property type="entry name" value="EF-G C-terminal domain-like"/>
    <property type="match status" value="2"/>
</dbReference>
<dbReference type="SUPFAM" id="SSF52540">
    <property type="entry name" value="P-loop containing nucleoside triphosphate hydrolases"/>
    <property type="match status" value="1"/>
</dbReference>
<dbReference type="SUPFAM" id="SSF50447">
    <property type="entry name" value="Translation proteins"/>
    <property type="match status" value="1"/>
</dbReference>
<dbReference type="PROSITE" id="PS00301">
    <property type="entry name" value="G_TR_1"/>
    <property type="match status" value="1"/>
</dbReference>
<dbReference type="PROSITE" id="PS51722">
    <property type="entry name" value="G_TR_2"/>
    <property type="match status" value="1"/>
</dbReference>
<accession>A5CR97</accession>
<organism>
    <name type="scientific">Clavibacter michiganensis subsp. michiganensis (strain NCPPB 382)</name>
    <dbReference type="NCBI Taxonomy" id="443906"/>
    <lineage>
        <taxon>Bacteria</taxon>
        <taxon>Bacillati</taxon>
        <taxon>Actinomycetota</taxon>
        <taxon>Actinomycetes</taxon>
        <taxon>Micrococcales</taxon>
        <taxon>Microbacteriaceae</taxon>
        <taxon>Clavibacter</taxon>
    </lineage>
</organism>
<keyword id="KW-1003">Cell membrane</keyword>
<keyword id="KW-0342">GTP-binding</keyword>
<keyword id="KW-0378">Hydrolase</keyword>
<keyword id="KW-0472">Membrane</keyword>
<keyword id="KW-0547">Nucleotide-binding</keyword>
<keyword id="KW-0648">Protein biosynthesis</keyword>